<accession>A8Z2K2</accession>
<gene>
    <name evidence="1" type="primary">nrdR</name>
    <name type="ordered locus">USA300HOU_1673</name>
</gene>
<feature type="chain" id="PRO_1000080841" description="Transcriptional repressor NrdR">
    <location>
        <begin position="1"/>
        <end position="156"/>
    </location>
</feature>
<feature type="domain" description="ATP-cone" evidence="1">
    <location>
        <begin position="49"/>
        <end position="139"/>
    </location>
</feature>
<feature type="zinc finger region" evidence="1">
    <location>
        <begin position="3"/>
        <end position="34"/>
    </location>
</feature>
<sequence length="156" mass="18204">MKCPKCNSTQSKVVDSRHADELNAIRRRRECENCGTRFTTFEHIEVSQLIVVKKDGTREQFSREKILNGLVRSCEKRPVRYQQLEDITNKVEWQLRDEGHTEVSSRDIGEHVMNLLMHVDQVSYVRFASVYKEFKDVDQLLASMQGILSENKRSDA</sequence>
<comment type="function">
    <text evidence="1">Negatively regulates transcription of bacterial ribonucleotide reductase nrd genes and operons by binding to NrdR-boxes.</text>
</comment>
<comment type="cofactor">
    <cofactor evidence="1">
        <name>Zn(2+)</name>
        <dbReference type="ChEBI" id="CHEBI:29105"/>
    </cofactor>
    <text evidence="1">Binds 1 zinc ion.</text>
</comment>
<comment type="similarity">
    <text evidence="1">Belongs to the NrdR family.</text>
</comment>
<evidence type="ECO:0000255" key="1">
    <source>
        <dbReference type="HAMAP-Rule" id="MF_00440"/>
    </source>
</evidence>
<protein>
    <recommendedName>
        <fullName evidence="1">Transcriptional repressor NrdR</fullName>
    </recommendedName>
</protein>
<reference key="1">
    <citation type="journal article" date="2007" name="BMC Microbiol.">
        <title>Subtle genetic changes enhance virulence of methicillin resistant and sensitive Staphylococcus aureus.</title>
        <authorList>
            <person name="Highlander S.K."/>
            <person name="Hulten K.G."/>
            <person name="Qin X."/>
            <person name="Jiang H."/>
            <person name="Yerrapragada S."/>
            <person name="Mason E.O. Jr."/>
            <person name="Shang Y."/>
            <person name="Williams T.M."/>
            <person name="Fortunov R.M."/>
            <person name="Liu Y."/>
            <person name="Igboeli O."/>
            <person name="Petrosino J."/>
            <person name="Tirumalai M."/>
            <person name="Uzman A."/>
            <person name="Fox G.E."/>
            <person name="Cardenas A.M."/>
            <person name="Muzny D.M."/>
            <person name="Hemphill L."/>
            <person name="Ding Y."/>
            <person name="Dugan S."/>
            <person name="Blyth P.R."/>
            <person name="Buhay C.J."/>
            <person name="Dinh H.H."/>
            <person name="Hawes A.C."/>
            <person name="Holder M."/>
            <person name="Kovar C.L."/>
            <person name="Lee S.L."/>
            <person name="Liu W."/>
            <person name="Nazareth L.V."/>
            <person name="Wang Q."/>
            <person name="Zhou J."/>
            <person name="Kaplan S.L."/>
            <person name="Weinstock G.M."/>
        </authorList>
    </citation>
    <scope>NUCLEOTIDE SEQUENCE [LARGE SCALE GENOMIC DNA]</scope>
    <source>
        <strain>USA300 / TCH1516</strain>
    </source>
</reference>
<keyword id="KW-0067">ATP-binding</keyword>
<keyword id="KW-0238">DNA-binding</keyword>
<keyword id="KW-0479">Metal-binding</keyword>
<keyword id="KW-0547">Nucleotide-binding</keyword>
<keyword id="KW-0678">Repressor</keyword>
<keyword id="KW-0804">Transcription</keyword>
<keyword id="KW-0805">Transcription regulation</keyword>
<keyword id="KW-0862">Zinc</keyword>
<keyword id="KW-0863">Zinc-finger</keyword>
<name>NRDR_STAAT</name>
<dbReference type="EMBL" id="CP000730">
    <property type="protein sequence ID" value="ABX29680.1"/>
    <property type="molecule type" value="Genomic_DNA"/>
</dbReference>
<dbReference type="RefSeq" id="WP_000650082.1">
    <property type="nucleotide sequence ID" value="NC_010079.1"/>
</dbReference>
<dbReference type="SMR" id="A8Z2K2"/>
<dbReference type="GeneID" id="66839865"/>
<dbReference type="KEGG" id="sax:USA300HOU_1673"/>
<dbReference type="HOGENOM" id="CLU_108412_0_0_9"/>
<dbReference type="GO" id="GO:0005524">
    <property type="term" value="F:ATP binding"/>
    <property type="evidence" value="ECO:0007669"/>
    <property type="project" value="UniProtKB-KW"/>
</dbReference>
<dbReference type="GO" id="GO:0003677">
    <property type="term" value="F:DNA binding"/>
    <property type="evidence" value="ECO:0007669"/>
    <property type="project" value="UniProtKB-KW"/>
</dbReference>
<dbReference type="GO" id="GO:0008270">
    <property type="term" value="F:zinc ion binding"/>
    <property type="evidence" value="ECO:0007669"/>
    <property type="project" value="UniProtKB-UniRule"/>
</dbReference>
<dbReference type="GO" id="GO:0045892">
    <property type="term" value="P:negative regulation of DNA-templated transcription"/>
    <property type="evidence" value="ECO:0007669"/>
    <property type="project" value="UniProtKB-UniRule"/>
</dbReference>
<dbReference type="HAMAP" id="MF_00440">
    <property type="entry name" value="NrdR"/>
    <property type="match status" value="1"/>
</dbReference>
<dbReference type="InterPro" id="IPR005144">
    <property type="entry name" value="ATP-cone_dom"/>
</dbReference>
<dbReference type="InterPro" id="IPR055173">
    <property type="entry name" value="NrdR-like_N"/>
</dbReference>
<dbReference type="InterPro" id="IPR003796">
    <property type="entry name" value="RNR_NrdR-like"/>
</dbReference>
<dbReference type="NCBIfam" id="TIGR00244">
    <property type="entry name" value="transcriptional regulator NrdR"/>
    <property type="match status" value="1"/>
</dbReference>
<dbReference type="PANTHER" id="PTHR30455">
    <property type="entry name" value="TRANSCRIPTIONAL REPRESSOR NRDR"/>
    <property type="match status" value="1"/>
</dbReference>
<dbReference type="PANTHER" id="PTHR30455:SF2">
    <property type="entry name" value="TRANSCRIPTIONAL REPRESSOR NRDR"/>
    <property type="match status" value="1"/>
</dbReference>
<dbReference type="Pfam" id="PF03477">
    <property type="entry name" value="ATP-cone"/>
    <property type="match status" value="1"/>
</dbReference>
<dbReference type="Pfam" id="PF22811">
    <property type="entry name" value="Zn_ribbon_NrdR"/>
    <property type="match status" value="1"/>
</dbReference>
<dbReference type="PROSITE" id="PS51161">
    <property type="entry name" value="ATP_CONE"/>
    <property type="match status" value="1"/>
</dbReference>
<organism>
    <name type="scientific">Staphylococcus aureus (strain USA300 / TCH1516)</name>
    <dbReference type="NCBI Taxonomy" id="451516"/>
    <lineage>
        <taxon>Bacteria</taxon>
        <taxon>Bacillati</taxon>
        <taxon>Bacillota</taxon>
        <taxon>Bacilli</taxon>
        <taxon>Bacillales</taxon>
        <taxon>Staphylococcaceae</taxon>
        <taxon>Staphylococcus</taxon>
    </lineage>
</organism>
<proteinExistence type="inferred from homology"/>